<proteinExistence type="inferred from homology"/>
<feature type="chain" id="PRO_0000257634" description="Dual-action ribosomal maturation protein DarP">
    <location>
        <begin position="1"/>
        <end position="173"/>
    </location>
</feature>
<organism>
    <name type="scientific">Pseudomonas fluorescens (strain ATCC BAA-477 / NRRL B-23932 / Pf-5)</name>
    <dbReference type="NCBI Taxonomy" id="220664"/>
    <lineage>
        <taxon>Bacteria</taxon>
        <taxon>Pseudomonadati</taxon>
        <taxon>Pseudomonadota</taxon>
        <taxon>Gammaproteobacteria</taxon>
        <taxon>Pseudomonadales</taxon>
        <taxon>Pseudomonadaceae</taxon>
        <taxon>Pseudomonas</taxon>
    </lineage>
</organism>
<dbReference type="EMBL" id="CP000076">
    <property type="protein sequence ID" value="AAY90191.1"/>
    <property type="molecule type" value="Genomic_DNA"/>
</dbReference>
<dbReference type="SMR" id="Q4KI98"/>
<dbReference type="STRING" id="220664.PFL_0904"/>
<dbReference type="KEGG" id="pfl:PFL_0904"/>
<dbReference type="PATRIC" id="fig|220664.5.peg.926"/>
<dbReference type="eggNOG" id="COG3028">
    <property type="taxonomic scope" value="Bacteria"/>
</dbReference>
<dbReference type="HOGENOM" id="CLU_106757_4_0_6"/>
<dbReference type="Proteomes" id="UP000008540">
    <property type="component" value="Chromosome"/>
</dbReference>
<dbReference type="GO" id="GO:0005829">
    <property type="term" value="C:cytosol"/>
    <property type="evidence" value="ECO:0007669"/>
    <property type="project" value="TreeGrafter"/>
</dbReference>
<dbReference type="GO" id="GO:0043022">
    <property type="term" value="F:ribosome binding"/>
    <property type="evidence" value="ECO:0007669"/>
    <property type="project" value="UniProtKB-UniRule"/>
</dbReference>
<dbReference type="GO" id="GO:0019843">
    <property type="term" value="F:rRNA binding"/>
    <property type="evidence" value="ECO:0007669"/>
    <property type="project" value="UniProtKB-UniRule"/>
</dbReference>
<dbReference type="GO" id="GO:1902626">
    <property type="term" value="P:assembly of large subunit precursor of preribosome"/>
    <property type="evidence" value="ECO:0007669"/>
    <property type="project" value="UniProtKB-UniRule"/>
</dbReference>
<dbReference type="CDD" id="cd16331">
    <property type="entry name" value="YjgA-like"/>
    <property type="match status" value="1"/>
</dbReference>
<dbReference type="FunFam" id="1.10.60.30:FF:000002">
    <property type="entry name" value="UPF0307 protein YjgA"/>
    <property type="match status" value="1"/>
</dbReference>
<dbReference type="Gene3D" id="1.10.60.30">
    <property type="entry name" value="PSPTO4464-like domains"/>
    <property type="match status" value="2"/>
</dbReference>
<dbReference type="HAMAP" id="MF_00765">
    <property type="entry name" value="DarP"/>
    <property type="match status" value="1"/>
</dbReference>
<dbReference type="InterPro" id="IPR006839">
    <property type="entry name" value="DarP"/>
</dbReference>
<dbReference type="InterPro" id="IPR023153">
    <property type="entry name" value="DarP_sf"/>
</dbReference>
<dbReference type="NCBIfam" id="NF003593">
    <property type="entry name" value="PRK05255.1-1"/>
    <property type="match status" value="1"/>
</dbReference>
<dbReference type="PANTHER" id="PTHR38101">
    <property type="entry name" value="UPF0307 PROTEIN YJGA"/>
    <property type="match status" value="1"/>
</dbReference>
<dbReference type="PANTHER" id="PTHR38101:SF1">
    <property type="entry name" value="UPF0307 PROTEIN YJGA"/>
    <property type="match status" value="1"/>
</dbReference>
<dbReference type="Pfam" id="PF04751">
    <property type="entry name" value="DarP"/>
    <property type="match status" value="1"/>
</dbReference>
<dbReference type="PIRSF" id="PIRSF016183">
    <property type="entry name" value="UCP016183"/>
    <property type="match status" value="1"/>
</dbReference>
<dbReference type="SUPFAM" id="SSF158710">
    <property type="entry name" value="PSPTO4464-like"/>
    <property type="match status" value="1"/>
</dbReference>
<keyword id="KW-0963">Cytoplasm</keyword>
<keyword id="KW-0690">Ribosome biogenesis</keyword>
<keyword id="KW-0694">RNA-binding</keyword>
<keyword id="KW-0699">rRNA-binding</keyword>
<name>DARP_PSEF5</name>
<comment type="function">
    <text evidence="1">Member of a network of 50S ribosomal subunit biogenesis factors which assembles along the 30S-50S interface, preventing incorrect 23S rRNA structures from forming. Promotes peptidyl transferase center (PTC) maturation.</text>
</comment>
<comment type="subcellular location">
    <subcellularLocation>
        <location evidence="1">Cytoplasm</location>
    </subcellularLocation>
    <text evidence="1">Associates with late stage pre-50S ribosomal subunits.</text>
</comment>
<comment type="similarity">
    <text evidence="1">Belongs to the DarP family.</text>
</comment>
<evidence type="ECO:0000255" key="1">
    <source>
        <dbReference type="HAMAP-Rule" id="MF_00765"/>
    </source>
</evidence>
<accession>Q4KI98</accession>
<reference key="1">
    <citation type="journal article" date="2005" name="Nat. Biotechnol.">
        <title>Complete genome sequence of the plant commensal Pseudomonas fluorescens Pf-5.</title>
        <authorList>
            <person name="Paulsen I.T."/>
            <person name="Press C.M."/>
            <person name="Ravel J."/>
            <person name="Kobayashi D.Y."/>
            <person name="Myers G.S.A."/>
            <person name="Mavrodi D.V."/>
            <person name="DeBoy R.T."/>
            <person name="Seshadri R."/>
            <person name="Ren Q."/>
            <person name="Madupu R."/>
            <person name="Dodson R.J."/>
            <person name="Durkin A.S."/>
            <person name="Brinkac L.M."/>
            <person name="Daugherty S.C."/>
            <person name="Sullivan S.A."/>
            <person name="Rosovitz M.J."/>
            <person name="Gwinn M.L."/>
            <person name="Zhou L."/>
            <person name="Schneider D.J."/>
            <person name="Cartinhour S.W."/>
            <person name="Nelson W.C."/>
            <person name="Weidman J."/>
            <person name="Watkins K."/>
            <person name="Tran K."/>
            <person name="Khouri H."/>
            <person name="Pierson E.A."/>
            <person name="Pierson L.S. III"/>
            <person name="Thomashow L.S."/>
            <person name="Loper J.E."/>
        </authorList>
    </citation>
    <scope>NUCLEOTIDE SEQUENCE [LARGE SCALE GENOMIC DNA]</scope>
    <source>
        <strain>ATCC BAA-477 / NRRL B-23932 / Pf-5</strain>
    </source>
</reference>
<protein>
    <recommendedName>
        <fullName evidence="1">Dual-action ribosomal maturation protein DarP</fullName>
    </recommendedName>
    <alternativeName>
        <fullName evidence="1">Large ribosomal subunit assembly factor DarP</fullName>
    </alternativeName>
</protein>
<sequence>MVDSYDDSLDGEKSKSQVKRELHALVDLGERLTTLKPDLLNKLPLTDALRRALADAPKHVAHIARKRHLQFIGKLMRDQDTDAILQLLDQLDASTRQYNERFHNLERWRDRLIGGGDDVLEKFVGEYPDADRQQLRSLIRQAQHELAHNKAPASSRKIFKYIRELDETQRGLR</sequence>
<gene>
    <name evidence="1" type="primary">darP</name>
    <name type="ordered locus">PFL_0904</name>
</gene>